<name>SSPN_GEOKA</name>
<proteinExistence type="inferred from homology"/>
<evidence type="ECO:0000255" key="1">
    <source>
        <dbReference type="HAMAP-Rule" id="MF_01505"/>
    </source>
</evidence>
<evidence type="ECO:0000256" key="2">
    <source>
        <dbReference type="SAM" id="MobiDB-lite"/>
    </source>
</evidence>
<protein>
    <recommendedName>
        <fullName evidence="1">Small, acid-soluble spore protein N</fullName>
        <shortName evidence="1">SASP N</shortName>
    </recommendedName>
</protein>
<dbReference type="EMBL" id="BA000043">
    <property type="protein sequence ID" value="BAD75845.1"/>
    <property type="molecule type" value="Genomic_DNA"/>
</dbReference>
<dbReference type="RefSeq" id="WP_011231056.1">
    <property type="nucleotide sequence ID" value="NC_006510.1"/>
</dbReference>
<dbReference type="STRING" id="235909.GK1560"/>
<dbReference type="KEGG" id="gka:GK1560"/>
<dbReference type="eggNOG" id="ENOG5033HHC">
    <property type="taxonomic scope" value="Bacteria"/>
</dbReference>
<dbReference type="HOGENOM" id="CLU_216714_0_0_9"/>
<dbReference type="Proteomes" id="UP000001172">
    <property type="component" value="Chromosome"/>
</dbReference>
<dbReference type="GO" id="GO:0042601">
    <property type="term" value="C:endospore-forming forespore"/>
    <property type="evidence" value="ECO:0007669"/>
    <property type="project" value="InterPro"/>
</dbReference>
<dbReference type="GO" id="GO:0030436">
    <property type="term" value="P:asexual sporulation"/>
    <property type="evidence" value="ECO:0007669"/>
    <property type="project" value="UniProtKB-UniRule"/>
</dbReference>
<dbReference type="GO" id="GO:0030435">
    <property type="term" value="P:sporulation resulting in formation of a cellular spore"/>
    <property type="evidence" value="ECO:0007669"/>
    <property type="project" value="UniProtKB-KW"/>
</dbReference>
<dbReference type="HAMAP" id="MF_01505">
    <property type="entry name" value="SspN"/>
    <property type="match status" value="1"/>
</dbReference>
<dbReference type="InterPro" id="IPR012612">
    <property type="entry name" value="SASP_SspN"/>
</dbReference>
<dbReference type="NCBIfam" id="NF006904">
    <property type="entry name" value="PRK09398.1"/>
    <property type="match status" value="1"/>
</dbReference>
<dbReference type="Pfam" id="PF08177">
    <property type="entry name" value="SspN"/>
    <property type="match status" value="1"/>
</dbReference>
<keyword id="KW-1185">Reference proteome</keyword>
<keyword id="KW-0749">Sporulation</keyword>
<feature type="chain" id="PRO_0000221472" description="Small, acid-soluble spore protein N">
    <location>
        <begin position="1"/>
        <end position="47"/>
    </location>
</feature>
<feature type="region of interest" description="Disordered" evidence="2">
    <location>
        <begin position="1"/>
        <end position="47"/>
    </location>
</feature>
<feature type="compositionally biased region" description="Basic residues" evidence="2">
    <location>
        <begin position="1"/>
        <end position="12"/>
    </location>
</feature>
<feature type="compositionally biased region" description="Polar residues" evidence="2">
    <location>
        <begin position="29"/>
        <end position="47"/>
    </location>
</feature>
<sequence>MSNPKGSRKHFVPNHIGTQPRAAGGNKGKQMQDQSGQHAQVIQTKGE</sequence>
<reference key="1">
    <citation type="journal article" date="2004" name="Nucleic Acids Res.">
        <title>Thermoadaptation trait revealed by the genome sequence of thermophilic Geobacillus kaustophilus.</title>
        <authorList>
            <person name="Takami H."/>
            <person name="Takaki Y."/>
            <person name="Chee G.-J."/>
            <person name="Nishi S."/>
            <person name="Shimamura S."/>
            <person name="Suzuki H."/>
            <person name="Matsui S."/>
            <person name="Uchiyama I."/>
        </authorList>
    </citation>
    <scope>NUCLEOTIDE SEQUENCE [LARGE SCALE GENOMIC DNA]</scope>
    <source>
        <strain>HTA426</strain>
    </source>
</reference>
<accession>Q5KZP1</accession>
<organism>
    <name type="scientific">Geobacillus kaustophilus (strain HTA426)</name>
    <dbReference type="NCBI Taxonomy" id="235909"/>
    <lineage>
        <taxon>Bacteria</taxon>
        <taxon>Bacillati</taxon>
        <taxon>Bacillota</taxon>
        <taxon>Bacilli</taxon>
        <taxon>Bacillales</taxon>
        <taxon>Anoxybacillaceae</taxon>
        <taxon>Geobacillus</taxon>
        <taxon>Geobacillus thermoleovorans group</taxon>
    </lineage>
</organism>
<gene>
    <name evidence="1" type="primary">sspN</name>
    <name type="ordered locus">GK1560</name>
</gene>
<comment type="subcellular location">
    <subcellularLocation>
        <location evidence="1">Spore core</location>
    </subcellularLocation>
</comment>
<comment type="induction">
    <text evidence="1">Expressed only in the forespore compartment of sporulating cells.</text>
</comment>
<comment type="similarity">
    <text evidence="1">Belongs to the SspN family.</text>
</comment>